<feature type="chain" id="PRO_0000066411" description="Uncharacterized proline-rich protein">
    <location>
        <begin position="1" status="less than"/>
        <end position="141" status="greater than"/>
    </location>
</feature>
<feature type="DNA-binding region" description="H-T-H motif" evidence="1">
    <location>
        <begin position="98"/>
        <end position="116"/>
    </location>
</feature>
<feature type="region of interest" description="Disordered" evidence="2">
    <location>
        <begin position="1"/>
        <end position="61"/>
    </location>
</feature>
<feature type="compositionally biased region" description="Pro residues" evidence="2">
    <location>
        <begin position="8"/>
        <end position="58"/>
    </location>
</feature>
<feature type="non-terminal residue">
    <location>
        <position position="1"/>
    </location>
</feature>
<feature type="non-terminal residue">
    <location>
        <position position="141"/>
    </location>
</feature>
<sequence>IRLLHSLTPPPPPPPPPPPPPPPPPPPPPPPPPPPPPPPPPPPPPPPPPPPPPPPPPPRRARIHHNIPLFLRFFKKSYSSHFHWRCGQRNHCHSFVCKRLLVAYPVRHFLSAACQFLPWLSINSFSGTEMLNNRFHGLITL</sequence>
<reference key="1">
    <citation type="journal article" date="1990" name="Biochem. Biophys. Res. Commun.">
        <title>Presence in invertebrate genomes of sequences characterized by the repetition of the triplet CCPurine.</title>
        <authorList>
            <person name="Bakalara N."/>
            <person name="Collet J."/>
            <person name="Planells R."/>
            <person name="Thouveny Y."/>
            <person name="Fontes M."/>
        </authorList>
    </citation>
    <scope>NUCLEOTIDE SEQUENCE</scope>
</reference>
<dbReference type="PIR" id="A34043">
    <property type="entry name" value="A34043"/>
</dbReference>
<dbReference type="GO" id="GO:0003677">
    <property type="term" value="F:DNA binding"/>
    <property type="evidence" value="ECO:0007669"/>
    <property type="project" value="UniProtKB-KW"/>
</dbReference>
<dbReference type="PRINTS" id="PR01217">
    <property type="entry name" value="PRICHEXTENSN"/>
</dbReference>
<name>YPRO_OWEFU</name>
<proteinExistence type="predicted"/>
<evidence type="ECO:0000255" key="1"/>
<evidence type="ECO:0000256" key="2">
    <source>
        <dbReference type="SAM" id="MobiDB-lite"/>
    </source>
</evidence>
<protein>
    <recommendedName>
        <fullName>Uncharacterized proline-rich protein</fullName>
    </recommendedName>
</protein>
<keyword id="KW-0238">DNA-binding</keyword>
<accession>P21260</accession>
<accession>P21261</accession>
<organism>
    <name type="scientific">Owenia fusiformis</name>
    <name type="common">Polychaete worm</name>
    <dbReference type="NCBI Taxonomy" id="6347"/>
    <lineage>
        <taxon>Eukaryota</taxon>
        <taxon>Metazoa</taxon>
        <taxon>Spiralia</taxon>
        <taxon>Lophotrochozoa</taxon>
        <taxon>Annelida</taxon>
        <taxon>Polychaeta</taxon>
        <taxon>Sedentaria</taxon>
        <taxon>Canalipalpata</taxon>
        <taxon>Sabellida</taxon>
        <taxon>Oweniida</taxon>
        <taxon>Oweniidae</taxon>
        <taxon>Owenia</taxon>
    </lineage>
</organism>